<accession>Q87LF9</accession>
<sequence length="334" mass="37346">MAFNLRNRNFLKLLDFSTKEIQFLLELSAELKKAKYAGTEQKTLQGKNIALIFEKSSTRTRCAFEVAAFDQGAQVTYIGPSGSQIGHKESMKDTARVLGRMYDGIEYRGFGQSIVEELGTHAGVPVWNGLTDEFHPTQILADFLTMQEHSRGKQLHEMTFAYLGDARNNMGNSLMVGAAKMGMDIRLVAPKAFWPEEHLVATCQDIAKQTGAKITLTENVEEGVKGCDFLYTDVWVSMGEAAEAWDERVALMTPYQINMDVIKQTGNPHVKFMHCLPAFHNDETTVGKEIAEKYGMKGLEVTEDVFESEYSIVFDEAENRMHTIKAIMVATLGS</sequence>
<reference key="1">
    <citation type="journal article" date="2003" name="Lancet">
        <title>Genome sequence of Vibrio parahaemolyticus: a pathogenic mechanism distinct from that of V. cholerae.</title>
        <authorList>
            <person name="Makino K."/>
            <person name="Oshima K."/>
            <person name="Kurokawa K."/>
            <person name="Yokoyama K."/>
            <person name="Uda T."/>
            <person name="Tagomori K."/>
            <person name="Iijima Y."/>
            <person name="Najima M."/>
            <person name="Nakano M."/>
            <person name="Yamashita A."/>
            <person name="Kubota Y."/>
            <person name="Kimura S."/>
            <person name="Yasunaga T."/>
            <person name="Honda T."/>
            <person name="Shinagawa H."/>
            <person name="Hattori M."/>
            <person name="Iida T."/>
        </authorList>
    </citation>
    <scope>NUCLEOTIDE SEQUENCE [LARGE SCALE GENOMIC DNA]</scope>
    <source>
        <strain>RIMD 2210633</strain>
    </source>
</reference>
<gene>
    <name evidence="2" type="primary">argF</name>
    <name type="ordered locus">VP2653</name>
</gene>
<comment type="function">
    <text evidence="1">Reversibly catalyzes the transfer of the carbamoyl group from carbamoyl phosphate (CP) to the N(epsilon) atom of ornithine (ORN) to produce L-citrulline.</text>
</comment>
<comment type="catalytic activity">
    <reaction evidence="2">
        <text>carbamoyl phosphate + L-ornithine = L-citrulline + phosphate + H(+)</text>
        <dbReference type="Rhea" id="RHEA:19513"/>
        <dbReference type="ChEBI" id="CHEBI:15378"/>
        <dbReference type="ChEBI" id="CHEBI:43474"/>
        <dbReference type="ChEBI" id="CHEBI:46911"/>
        <dbReference type="ChEBI" id="CHEBI:57743"/>
        <dbReference type="ChEBI" id="CHEBI:58228"/>
        <dbReference type="EC" id="2.1.3.3"/>
    </reaction>
</comment>
<comment type="pathway">
    <text evidence="2">Amino-acid biosynthesis; L-arginine biosynthesis; L-arginine from L-ornithine and carbamoyl phosphate: step 1/3.</text>
</comment>
<comment type="subcellular location">
    <subcellularLocation>
        <location evidence="2">Cytoplasm</location>
    </subcellularLocation>
</comment>
<comment type="similarity">
    <text evidence="2">Belongs to the aspartate/ornithine carbamoyltransferase superfamily. OTCase family.</text>
</comment>
<keyword id="KW-0028">Amino-acid biosynthesis</keyword>
<keyword id="KW-0055">Arginine biosynthesis</keyword>
<keyword id="KW-0963">Cytoplasm</keyword>
<keyword id="KW-0808">Transferase</keyword>
<evidence type="ECO:0000250" key="1"/>
<evidence type="ECO:0000255" key="2">
    <source>
        <dbReference type="HAMAP-Rule" id="MF_01109"/>
    </source>
</evidence>
<dbReference type="EC" id="2.1.3.3" evidence="2"/>
<dbReference type="EMBL" id="BA000031">
    <property type="protein sequence ID" value="BAC60916.1"/>
    <property type="molecule type" value="Genomic_DNA"/>
</dbReference>
<dbReference type="RefSeq" id="NP_799032.1">
    <property type="nucleotide sequence ID" value="NC_004603.1"/>
</dbReference>
<dbReference type="RefSeq" id="WP_005455105.1">
    <property type="nucleotide sequence ID" value="NC_004603.1"/>
</dbReference>
<dbReference type="SMR" id="Q87LF9"/>
<dbReference type="GeneID" id="1190198"/>
<dbReference type="KEGG" id="vpa:VP2653"/>
<dbReference type="PATRIC" id="fig|223926.6.peg.2548"/>
<dbReference type="eggNOG" id="COG0078">
    <property type="taxonomic scope" value="Bacteria"/>
</dbReference>
<dbReference type="HOGENOM" id="CLU_043846_3_1_6"/>
<dbReference type="UniPathway" id="UPA00068">
    <property type="reaction ID" value="UER00112"/>
</dbReference>
<dbReference type="Proteomes" id="UP000002493">
    <property type="component" value="Chromosome 1"/>
</dbReference>
<dbReference type="GO" id="GO:0005737">
    <property type="term" value="C:cytoplasm"/>
    <property type="evidence" value="ECO:0007669"/>
    <property type="project" value="UniProtKB-SubCell"/>
</dbReference>
<dbReference type="GO" id="GO:0016597">
    <property type="term" value="F:amino acid binding"/>
    <property type="evidence" value="ECO:0007669"/>
    <property type="project" value="InterPro"/>
</dbReference>
<dbReference type="GO" id="GO:0004585">
    <property type="term" value="F:ornithine carbamoyltransferase activity"/>
    <property type="evidence" value="ECO:0007669"/>
    <property type="project" value="UniProtKB-UniRule"/>
</dbReference>
<dbReference type="GO" id="GO:0042450">
    <property type="term" value="P:arginine biosynthetic process via ornithine"/>
    <property type="evidence" value="ECO:0007669"/>
    <property type="project" value="TreeGrafter"/>
</dbReference>
<dbReference type="GO" id="GO:0019240">
    <property type="term" value="P:citrulline biosynthetic process"/>
    <property type="evidence" value="ECO:0007669"/>
    <property type="project" value="TreeGrafter"/>
</dbReference>
<dbReference type="GO" id="GO:0006526">
    <property type="term" value="P:L-arginine biosynthetic process"/>
    <property type="evidence" value="ECO:0007669"/>
    <property type="project" value="UniProtKB-UniRule"/>
</dbReference>
<dbReference type="FunFam" id="3.40.50.1370:FF:000003">
    <property type="entry name" value="Ornithine carbamoyltransferase"/>
    <property type="match status" value="1"/>
</dbReference>
<dbReference type="FunFam" id="3.40.50.1370:FF:000004">
    <property type="entry name" value="Ornithine carbamoyltransferase"/>
    <property type="match status" value="1"/>
</dbReference>
<dbReference type="Gene3D" id="3.40.50.1370">
    <property type="entry name" value="Aspartate/ornithine carbamoyltransferase"/>
    <property type="match status" value="2"/>
</dbReference>
<dbReference type="HAMAP" id="MF_01109">
    <property type="entry name" value="OTCase"/>
    <property type="match status" value="1"/>
</dbReference>
<dbReference type="InterPro" id="IPR006132">
    <property type="entry name" value="Asp/Orn_carbamoyltranf_P-bd"/>
</dbReference>
<dbReference type="InterPro" id="IPR006130">
    <property type="entry name" value="Asp/Orn_carbamoylTrfase"/>
</dbReference>
<dbReference type="InterPro" id="IPR036901">
    <property type="entry name" value="Asp/Orn_carbamoylTrfase_sf"/>
</dbReference>
<dbReference type="InterPro" id="IPR006131">
    <property type="entry name" value="Asp_carbamoyltransf_Asp/Orn-bd"/>
</dbReference>
<dbReference type="InterPro" id="IPR002292">
    <property type="entry name" value="Orn/put_carbamltrans"/>
</dbReference>
<dbReference type="InterPro" id="IPR024904">
    <property type="entry name" value="OTCase_ArgI"/>
</dbReference>
<dbReference type="NCBIfam" id="TIGR00658">
    <property type="entry name" value="orni_carb_tr"/>
    <property type="match status" value="1"/>
</dbReference>
<dbReference type="NCBIfam" id="NF002470">
    <property type="entry name" value="PRK01713.1"/>
    <property type="match status" value="1"/>
</dbReference>
<dbReference type="NCBIfam" id="NF003286">
    <property type="entry name" value="PRK04284.1"/>
    <property type="match status" value="1"/>
</dbReference>
<dbReference type="PANTHER" id="PTHR45753:SF2">
    <property type="entry name" value="ORNITHINE CARBAMOYLTRANSFERASE"/>
    <property type="match status" value="1"/>
</dbReference>
<dbReference type="PANTHER" id="PTHR45753">
    <property type="entry name" value="ORNITHINE CARBAMOYLTRANSFERASE, MITOCHONDRIAL"/>
    <property type="match status" value="1"/>
</dbReference>
<dbReference type="Pfam" id="PF00185">
    <property type="entry name" value="OTCace"/>
    <property type="match status" value="1"/>
</dbReference>
<dbReference type="Pfam" id="PF02729">
    <property type="entry name" value="OTCace_N"/>
    <property type="match status" value="1"/>
</dbReference>
<dbReference type="PRINTS" id="PR00100">
    <property type="entry name" value="AOTCASE"/>
</dbReference>
<dbReference type="PRINTS" id="PR00102">
    <property type="entry name" value="OTCASE"/>
</dbReference>
<dbReference type="SUPFAM" id="SSF53671">
    <property type="entry name" value="Aspartate/ornithine carbamoyltransferase"/>
    <property type="match status" value="1"/>
</dbReference>
<dbReference type="PROSITE" id="PS00097">
    <property type="entry name" value="CARBAMOYLTRANSFERASE"/>
    <property type="match status" value="1"/>
</dbReference>
<organism>
    <name type="scientific">Vibrio parahaemolyticus serotype O3:K6 (strain RIMD 2210633)</name>
    <dbReference type="NCBI Taxonomy" id="223926"/>
    <lineage>
        <taxon>Bacteria</taxon>
        <taxon>Pseudomonadati</taxon>
        <taxon>Pseudomonadota</taxon>
        <taxon>Gammaproteobacteria</taxon>
        <taxon>Vibrionales</taxon>
        <taxon>Vibrionaceae</taxon>
        <taxon>Vibrio</taxon>
    </lineage>
</organism>
<protein>
    <recommendedName>
        <fullName evidence="2">Ornithine carbamoyltransferase</fullName>
        <shortName evidence="2">OTCase</shortName>
        <ecNumber evidence="2">2.1.3.3</ecNumber>
    </recommendedName>
</protein>
<feature type="chain" id="PRO_0000113054" description="Ornithine carbamoyltransferase">
    <location>
        <begin position="1"/>
        <end position="334"/>
    </location>
</feature>
<feature type="binding site" evidence="2">
    <location>
        <begin position="57"/>
        <end position="60"/>
    </location>
    <ligand>
        <name>carbamoyl phosphate</name>
        <dbReference type="ChEBI" id="CHEBI:58228"/>
    </ligand>
</feature>
<feature type="binding site" evidence="2">
    <location>
        <position position="84"/>
    </location>
    <ligand>
        <name>carbamoyl phosphate</name>
        <dbReference type="ChEBI" id="CHEBI:58228"/>
    </ligand>
</feature>
<feature type="binding site" evidence="2">
    <location>
        <position position="108"/>
    </location>
    <ligand>
        <name>carbamoyl phosphate</name>
        <dbReference type="ChEBI" id="CHEBI:58228"/>
    </ligand>
</feature>
<feature type="binding site" evidence="2">
    <location>
        <begin position="135"/>
        <end position="138"/>
    </location>
    <ligand>
        <name>carbamoyl phosphate</name>
        <dbReference type="ChEBI" id="CHEBI:58228"/>
    </ligand>
</feature>
<feature type="binding site" evidence="2">
    <location>
        <position position="169"/>
    </location>
    <ligand>
        <name>L-ornithine</name>
        <dbReference type="ChEBI" id="CHEBI:46911"/>
    </ligand>
</feature>
<feature type="binding site" evidence="2">
    <location>
        <position position="233"/>
    </location>
    <ligand>
        <name>L-ornithine</name>
        <dbReference type="ChEBI" id="CHEBI:46911"/>
    </ligand>
</feature>
<feature type="binding site" evidence="2">
    <location>
        <begin position="237"/>
        <end position="238"/>
    </location>
    <ligand>
        <name>L-ornithine</name>
        <dbReference type="ChEBI" id="CHEBI:46911"/>
    </ligand>
</feature>
<feature type="binding site" evidence="2">
    <location>
        <begin position="275"/>
        <end position="276"/>
    </location>
    <ligand>
        <name>carbamoyl phosphate</name>
        <dbReference type="ChEBI" id="CHEBI:58228"/>
    </ligand>
</feature>
<feature type="binding site" evidence="2">
    <location>
        <position position="320"/>
    </location>
    <ligand>
        <name>carbamoyl phosphate</name>
        <dbReference type="ChEBI" id="CHEBI:58228"/>
    </ligand>
</feature>
<proteinExistence type="inferred from homology"/>
<name>OTC_VIBPA</name>